<gene>
    <name evidence="1" type="primary">rimM</name>
    <name type="ordered locus">LBL_1658</name>
</gene>
<comment type="function">
    <text evidence="1">An accessory protein needed during the final step in the assembly of 30S ribosomal subunit, possibly for assembly of the head region. Essential for efficient processing of 16S rRNA. May be needed both before and after RbfA during the maturation of 16S rRNA. It has affinity for free ribosomal 30S subunits but not for 70S ribosomes.</text>
</comment>
<comment type="subunit">
    <text evidence="1">Binds ribosomal protein uS19.</text>
</comment>
<comment type="subcellular location">
    <subcellularLocation>
        <location evidence="1">Cytoplasm</location>
    </subcellularLocation>
</comment>
<comment type="domain">
    <text evidence="1">The PRC barrel domain binds ribosomal protein uS19.</text>
</comment>
<comment type="similarity">
    <text evidence="1">Belongs to the RimM family.</text>
</comment>
<name>RIMM_LEPBL</name>
<accession>Q050Y7</accession>
<organism>
    <name type="scientific">Leptospira borgpetersenii serovar Hardjo-bovis (strain L550)</name>
    <dbReference type="NCBI Taxonomy" id="355276"/>
    <lineage>
        <taxon>Bacteria</taxon>
        <taxon>Pseudomonadati</taxon>
        <taxon>Spirochaetota</taxon>
        <taxon>Spirochaetia</taxon>
        <taxon>Leptospirales</taxon>
        <taxon>Leptospiraceae</taxon>
        <taxon>Leptospira</taxon>
    </lineage>
</organism>
<keyword id="KW-0143">Chaperone</keyword>
<keyword id="KW-0963">Cytoplasm</keyword>
<keyword id="KW-0690">Ribosome biogenesis</keyword>
<keyword id="KW-0698">rRNA processing</keyword>
<evidence type="ECO:0000255" key="1">
    <source>
        <dbReference type="HAMAP-Rule" id="MF_00014"/>
    </source>
</evidence>
<sequence length="176" mass="20197">MTEGWISLGQLGKPFGIKGWLRFNVRDSILTKVKLPVRLKLGKSDPNFPETEIILLEIRPHNGKFVVRFEGIATPEEAEKWVGGILFLPQNLLPKIETKDEFYVRDLIGLQAIDEFGKSLNWKLTDIQDNPAHPILVFSKSEEEEILIPFLHVFVGELNLEKKTIVLIQPELWNEV</sequence>
<feature type="chain" id="PRO_1000001191" description="Ribosome maturation factor RimM">
    <location>
        <begin position="1"/>
        <end position="176"/>
    </location>
</feature>
<feature type="domain" description="PRC barrel" evidence="1">
    <location>
        <begin position="99"/>
        <end position="174"/>
    </location>
</feature>
<dbReference type="EMBL" id="CP000348">
    <property type="protein sequence ID" value="ABJ79108.1"/>
    <property type="molecule type" value="Genomic_DNA"/>
</dbReference>
<dbReference type="RefSeq" id="WP_004278755.1">
    <property type="nucleotide sequence ID" value="NC_008508.1"/>
</dbReference>
<dbReference type="SMR" id="Q050Y7"/>
<dbReference type="KEGG" id="lbl:LBL_1658"/>
<dbReference type="HOGENOM" id="CLU_077636_1_0_12"/>
<dbReference type="GO" id="GO:0005737">
    <property type="term" value="C:cytoplasm"/>
    <property type="evidence" value="ECO:0007669"/>
    <property type="project" value="UniProtKB-SubCell"/>
</dbReference>
<dbReference type="GO" id="GO:0005840">
    <property type="term" value="C:ribosome"/>
    <property type="evidence" value="ECO:0007669"/>
    <property type="project" value="InterPro"/>
</dbReference>
<dbReference type="GO" id="GO:0043022">
    <property type="term" value="F:ribosome binding"/>
    <property type="evidence" value="ECO:0007669"/>
    <property type="project" value="InterPro"/>
</dbReference>
<dbReference type="GO" id="GO:0042274">
    <property type="term" value="P:ribosomal small subunit biogenesis"/>
    <property type="evidence" value="ECO:0007669"/>
    <property type="project" value="UniProtKB-UniRule"/>
</dbReference>
<dbReference type="GO" id="GO:0006364">
    <property type="term" value="P:rRNA processing"/>
    <property type="evidence" value="ECO:0007669"/>
    <property type="project" value="UniProtKB-UniRule"/>
</dbReference>
<dbReference type="Gene3D" id="2.30.30.240">
    <property type="entry name" value="PRC-barrel domain"/>
    <property type="match status" value="1"/>
</dbReference>
<dbReference type="Gene3D" id="2.40.30.60">
    <property type="entry name" value="RimM"/>
    <property type="match status" value="1"/>
</dbReference>
<dbReference type="HAMAP" id="MF_00014">
    <property type="entry name" value="Ribosome_mat_RimM"/>
    <property type="match status" value="1"/>
</dbReference>
<dbReference type="InterPro" id="IPR011033">
    <property type="entry name" value="PRC_barrel-like_sf"/>
</dbReference>
<dbReference type="InterPro" id="IPR056792">
    <property type="entry name" value="PRC_RimM"/>
</dbReference>
<dbReference type="InterPro" id="IPR011961">
    <property type="entry name" value="RimM"/>
</dbReference>
<dbReference type="InterPro" id="IPR002676">
    <property type="entry name" value="RimM_N"/>
</dbReference>
<dbReference type="InterPro" id="IPR036976">
    <property type="entry name" value="RimM_N_sf"/>
</dbReference>
<dbReference type="InterPro" id="IPR009000">
    <property type="entry name" value="Transl_B-barrel_sf"/>
</dbReference>
<dbReference type="NCBIfam" id="TIGR02273">
    <property type="entry name" value="16S_RimM"/>
    <property type="match status" value="1"/>
</dbReference>
<dbReference type="NCBIfam" id="NF011184">
    <property type="entry name" value="PRK14590.1"/>
    <property type="match status" value="1"/>
</dbReference>
<dbReference type="PANTHER" id="PTHR33692">
    <property type="entry name" value="RIBOSOME MATURATION FACTOR RIMM"/>
    <property type="match status" value="1"/>
</dbReference>
<dbReference type="PANTHER" id="PTHR33692:SF1">
    <property type="entry name" value="RIBOSOME MATURATION FACTOR RIMM"/>
    <property type="match status" value="1"/>
</dbReference>
<dbReference type="Pfam" id="PF24986">
    <property type="entry name" value="PRC_RimM"/>
    <property type="match status" value="1"/>
</dbReference>
<dbReference type="Pfam" id="PF01782">
    <property type="entry name" value="RimM"/>
    <property type="match status" value="1"/>
</dbReference>
<dbReference type="SUPFAM" id="SSF50346">
    <property type="entry name" value="PRC-barrel domain"/>
    <property type="match status" value="1"/>
</dbReference>
<dbReference type="SUPFAM" id="SSF50447">
    <property type="entry name" value="Translation proteins"/>
    <property type="match status" value="1"/>
</dbReference>
<proteinExistence type="inferred from homology"/>
<reference key="1">
    <citation type="journal article" date="2006" name="Proc. Natl. Acad. Sci. U.S.A.">
        <title>Genome reduction in Leptospira borgpetersenii reflects limited transmission potential.</title>
        <authorList>
            <person name="Bulach D.M."/>
            <person name="Zuerner R.L."/>
            <person name="Wilson P."/>
            <person name="Seemann T."/>
            <person name="McGrath A."/>
            <person name="Cullen P.A."/>
            <person name="Davis J."/>
            <person name="Johnson M."/>
            <person name="Kuczek E."/>
            <person name="Alt D.P."/>
            <person name="Peterson-Burch B."/>
            <person name="Coppel R.L."/>
            <person name="Rood J.I."/>
            <person name="Davies J.K."/>
            <person name="Adler B."/>
        </authorList>
    </citation>
    <scope>NUCLEOTIDE SEQUENCE [LARGE SCALE GENOMIC DNA]</scope>
    <source>
        <strain>L550</strain>
    </source>
</reference>
<protein>
    <recommendedName>
        <fullName evidence="1">Ribosome maturation factor RimM</fullName>
    </recommendedName>
</protein>